<name>RNPA_OCEIH</name>
<accession>Q8EKU0</accession>
<keyword id="KW-0255">Endonuclease</keyword>
<keyword id="KW-0378">Hydrolase</keyword>
<keyword id="KW-0540">Nuclease</keyword>
<keyword id="KW-1185">Reference proteome</keyword>
<keyword id="KW-0694">RNA-binding</keyword>
<keyword id="KW-0819">tRNA processing</keyword>
<feature type="chain" id="PRO_0000198501" description="Ribonuclease P protein component">
    <location>
        <begin position="1"/>
        <end position="121"/>
    </location>
</feature>
<sequence>MKKQYRIKQNEEFQYTFKKGHSFANRQLVIYYREKEDQCHFRIGLSVGKKIGNAVMRNRIKRCLRQSFHELEPDIKPAYDIVIIARNPTRNMNCGEIKKSLSHLLYKEGLLKNTRNKTSLR</sequence>
<dbReference type="EC" id="3.1.26.5" evidence="1"/>
<dbReference type="EMBL" id="BA000028">
    <property type="protein sequence ID" value="BAC15451.1"/>
    <property type="molecule type" value="Genomic_DNA"/>
</dbReference>
<dbReference type="RefSeq" id="WP_011067893.1">
    <property type="nucleotide sequence ID" value="NC_004193.1"/>
</dbReference>
<dbReference type="SMR" id="Q8EKU0"/>
<dbReference type="STRING" id="221109.gene:10735747"/>
<dbReference type="KEGG" id="oih:OB3495"/>
<dbReference type="eggNOG" id="COG0594">
    <property type="taxonomic scope" value="Bacteria"/>
</dbReference>
<dbReference type="HOGENOM" id="CLU_117179_9_1_9"/>
<dbReference type="OrthoDB" id="9810867at2"/>
<dbReference type="PhylomeDB" id="Q8EKU0"/>
<dbReference type="Proteomes" id="UP000000822">
    <property type="component" value="Chromosome"/>
</dbReference>
<dbReference type="GO" id="GO:0030677">
    <property type="term" value="C:ribonuclease P complex"/>
    <property type="evidence" value="ECO:0007669"/>
    <property type="project" value="TreeGrafter"/>
</dbReference>
<dbReference type="GO" id="GO:0042781">
    <property type="term" value="F:3'-tRNA processing endoribonuclease activity"/>
    <property type="evidence" value="ECO:0007669"/>
    <property type="project" value="TreeGrafter"/>
</dbReference>
<dbReference type="GO" id="GO:0004526">
    <property type="term" value="F:ribonuclease P activity"/>
    <property type="evidence" value="ECO:0007669"/>
    <property type="project" value="UniProtKB-UniRule"/>
</dbReference>
<dbReference type="GO" id="GO:0000049">
    <property type="term" value="F:tRNA binding"/>
    <property type="evidence" value="ECO:0007669"/>
    <property type="project" value="UniProtKB-UniRule"/>
</dbReference>
<dbReference type="GO" id="GO:0001682">
    <property type="term" value="P:tRNA 5'-leader removal"/>
    <property type="evidence" value="ECO:0007669"/>
    <property type="project" value="UniProtKB-UniRule"/>
</dbReference>
<dbReference type="FunFam" id="3.30.230.10:FF:000021">
    <property type="entry name" value="Ribonuclease P protein component"/>
    <property type="match status" value="1"/>
</dbReference>
<dbReference type="Gene3D" id="3.30.230.10">
    <property type="match status" value="1"/>
</dbReference>
<dbReference type="HAMAP" id="MF_00227">
    <property type="entry name" value="RNase_P"/>
    <property type="match status" value="1"/>
</dbReference>
<dbReference type="InterPro" id="IPR020568">
    <property type="entry name" value="Ribosomal_Su5_D2-typ_SF"/>
</dbReference>
<dbReference type="InterPro" id="IPR014721">
    <property type="entry name" value="Ribsml_uS5_D2-typ_fold_subgr"/>
</dbReference>
<dbReference type="InterPro" id="IPR000100">
    <property type="entry name" value="RNase_P"/>
</dbReference>
<dbReference type="InterPro" id="IPR020539">
    <property type="entry name" value="RNase_P_CS"/>
</dbReference>
<dbReference type="NCBIfam" id="TIGR00188">
    <property type="entry name" value="rnpA"/>
    <property type="match status" value="1"/>
</dbReference>
<dbReference type="PANTHER" id="PTHR33992">
    <property type="entry name" value="RIBONUCLEASE P PROTEIN COMPONENT"/>
    <property type="match status" value="1"/>
</dbReference>
<dbReference type="PANTHER" id="PTHR33992:SF1">
    <property type="entry name" value="RIBONUCLEASE P PROTEIN COMPONENT"/>
    <property type="match status" value="1"/>
</dbReference>
<dbReference type="Pfam" id="PF00825">
    <property type="entry name" value="Ribonuclease_P"/>
    <property type="match status" value="1"/>
</dbReference>
<dbReference type="SUPFAM" id="SSF54211">
    <property type="entry name" value="Ribosomal protein S5 domain 2-like"/>
    <property type="match status" value="1"/>
</dbReference>
<dbReference type="PROSITE" id="PS00648">
    <property type="entry name" value="RIBONUCLEASE_P"/>
    <property type="match status" value="1"/>
</dbReference>
<protein>
    <recommendedName>
        <fullName evidence="1">Ribonuclease P protein component</fullName>
        <shortName evidence="1">RNase P protein</shortName>
        <shortName evidence="1">RNaseP protein</shortName>
        <ecNumber evidence="1">3.1.26.5</ecNumber>
    </recommendedName>
    <alternativeName>
        <fullName evidence="1">Protein C5</fullName>
    </alternativeName>
</protein>
<reference key="1">
    <citation type="journal article" date="2002" name="Nucleic Acids Res.">
        <title>Genome sequence of Oceanobacillus iheyensis isolated from the Iheya Ridge and its unexpected adaptive capabilities to extreme environments.</title>
        <authorList>
            <person name="Takami H."/>
            <person name="Takaki Y."/>
            <person name="Uchiyama I."/>
        </authorList>
    </citation>
    <scope>NUCLEOTIDE SEQUENCE [LARGE SCALE GENOMIC DNA]</scope>
    <source>
        <strain>DSM 14371 / CIP 107618 / JCM 11309 / KCTC 3954 / HTE831</strain>
    </source>
</reference>
<comment type="function">
    <text evidence="1">RNaseP catalyzes the removal of the 5'-leader sequence from pre-tRNA to produce the mature 5'-terminus. It can also cleave other RNA substrates such as 4.5S RNA. The protein component plays an auxiliary but essential role in vivo by binding to the 5'-leader sequence and broadening the substrate specificity of the ribozyme.</text>
</comment>
<comment type="catalytic activity">
    <reaction evidence="1">
        <text>Endonucleolytic cleavage of RNA, removing 5'-extranucleotides from tRNA precursor.</text>
        <dbReference type="EC" id="3.1.26.5"/>
    </reaction>
</comment>
<comment type="subunit">
    <text evidence="1">Consists of a catalytic RNA component (M1 or rnpB) and a protein subunit.</text>
</comment>
<comment type="similarity">
    <text evidence="1">Belongs to the RnpA family.</text>
</comment>
<organism>
    <name type="scientific">Oceanobacillus iheyensis (strain DSM 14371 / CIP 107618 / JCM 11309 / KCTC 3954 / HTE831)</name>
    <dbReference type="NCBI Taxonomy" id="221109"/>
    <lineage>
        <taxon>Bacteria</taxon>
        <taxon>Bacillati</taxon>
        <taxon>Bacillota</taxon>
        <taxon>Bacilli</taxon>
        <taxon>Bacillales</taxon>
        <taxon>Bacillaceae</taxon>
        <taxon>Oceanobacillus</taxon>
    </lineage>
</organism>
<proteinExistence type="inferred from homology"/>
<gene>
    <name evidence="1" type="primary">rnpA</name>
    <name type="ordered locus">OB3495</name>
</gene>
<evidence type="ECO:0000255" key="1">
    <source>
        <dbReference type="HAMAP-Rule" id="MF_00227"/>
    </source>
</evidence>